<sequence length="183" mass="19859">MTATAQQLEYLKNSIKSIQDYPKPGILFRDVTSLLEDPKAYALSIDLLVERYKNAGITKVVGTEARGFLFGAPVALGLGVGFVPVRKPGKLPRETISETYDLEYGTDQLEIHVDAIKPGDKVLVVDDLLATGGTIEATVKLIRRLGGEVADAAFIINLFDLGGEQRLEKQGITSYSLVPFPGH</sequence>
<evidence type="ECO:0000255" key="1">
    <source>
        <dbReference type="HAMAP-Rule" id="MF_00004"/>
    </source>
</evidence>
<organism>
    <name type="scientific">Escherichia coli (strain ATCC 8739 / DSM 1576 / NBRC 3972 / NCIMB 8545 / WDCM 00012 / Crooks)</name>
    <dbReference type="NCBI Taxonomy" id="481805"/>
    <lineage>
        <taxon>Bacteria</taxon>
        <taxon>Pseudomonadati</taxon>
        <taxon>Pseudomonadota</taxon>
        <taxon>Gammaproteobacteria</taxon>
        <taxon>Enterobacterales</taxon>
        <taxon>Enterobacteriaceae</taxon>
        <taxon>Escherichia</taxon>
    </lineage>
</organism>
<dbReference type="EC" id="2.4.2.7" evidence="1"/>
<dbReference type="EMBL" id="CP000946">
    <property type="protein sequence ID" value="ACA78770.1"/>
    <property type="molecule type" value="Genomic_DNA"/>
</dbReference>
<dbReference type="RefSeq" id="WP_000127356.1">
    <property type="nucleotide sequence ID" value="NZ_MTFT01000020.1"/>
</dbReference>
<dbReference type="SMR" id="B1IZC5"/>
<dbReference type="GeneID" id="93776981"/>
<dbReference type="KEGG" id="ecl:EcolC_3147"/>
<dbReference type="HOGENOM" id="CLU_063339_3_0_6"/>
<dbReference type="UniPathway" id="UPA00588">
    <property type="reaction ID" value="UER00646"/>
</dbReference>
<dbReference type="GO" id="GO:0005737">
    <property type="term" value="C:cytoplasm"/>
    <property type="evidence" value="ECO:0007669"/>
    <property type="project" value="UniProtKB-SubCell"/>
</dbReference>
<dbReference type="GO" id="GO:0002055">
    <property type="term" value="F:adenine binding"/>
    <property type="evidence" value="ECO:0007669"/>
    <property type="project" value="TreeGrafter"/>
</dbReference>
<dbReference type="GO" id="GO:0003999">
    <property type="term" value="F:adenine phosphoribosyltransferase activity"/>
    <property type="evidence" value="ECO:0007669"/>
    <property type="project" value="UniProtKB-UniRule"/>
</dbReference>
<dbReference type="GO" id="GO:0016208">
    <property type="term" value="F:AMP binding"/>
    <property type="evidence" value="ECO:0007669"/>
    <property type="project" value="TreeGrafter"/>
</dbReference>
<dbReference type="GO" id="GO:0006168">
    <property type="term" value="P:adenine salvage"/>
    <property type="evidence" value="ECO:0007669"/>
    <property type="project" value="InterPro"/>
</dbReference>
<dbReference type="GO" id="GO:0044209">
    <property type="term" value="P:AMP salvage"/>
    <property type="evidence" value="ECO:0007669"/>
    <property type="project" value="UniProtKB-UniRule"/>
</dbReference>
<dbReference type="GO" id="GO:0006166">
    <property type="term" value="P:purine ribonucleoside salvage"/>
    <property type="evidence" value="ECO:0007669"/>
    <property type="project" value="UniProtKB-KW"/>
</dbReference>
<dbReference type="CDD" id="cd06223">
    <property type="entry name" value="PRTases_typeI"/>
    <property type="match status" value="1"/>
</dbReference>
<dbReference type="FunFam" id="3.40.50.2020:FF:000004">
    <property type="entry name" value="Adenine phosphoribosyltransferase"/>
    <property type="match status" value="1"/>
</dbReference>
<dbReference type="Gene3D" id="3.40.50.2020">
    <property type="match status" value="1"/>
</dbReference>
<dbReference type="HAMAP" id="MF_00004">
    <property type="entry name" value="Aden_phosphoribosyltr"/>
    <property type="match status" value="1"/>
</dbReference>
<dbReference type="InterPro" id="IPR005764">
    <property type="entry name" value="Ade_phspho_trans"/>
</dbReference>
<dbReference type="InterPro" id="IPR000836">
    <property type="entry name" value="PRibTrfase_dom"/>
</dbReference>
<dbReference type="InterPro" id="IPR029057">
    <property type="entry name" value="PRTase-like"/>
</dbReference>
<dbReference type="InterPro" id="IPR050054">
    <property type="entry name" value="UPRTase/APRTase"/>
</dbReference>
<dbReference type="NCBIfam" id="TIGR01090">
    <property type="entry name" value="apt"/>
    <property type="match status" value="1"/>
</dbReference>
<dbReference type="NCBIfam" id="NF002632">
    <property type="entry name" value="PRK02304.1-1"/>
    <property type="match status" value="1"/>
</dbReference>
<dbReference type="NCBIfam" id="NF002633">
    <property type="entry name" value="PRK02304.1-2"/>
    <property type="match status" value="1"/>
</dbReference>
<dbReference type="NCBIfam" id="NF002634">
    <property type="entry name" value="PRK02304.1-3"/>
    <property type="match status" value="1"/>
</dbReference>
<dbReference type="NCBIfam" id="NF002636">
    <property type="entry name" value="PRK02304.1-5"/>
    <property type="match status" value="1"/>
</dbReference>
<dbReference type="PANTHER" id="PTHR32315">
    <property type="entry name" value="ADENINE PHOSPHORIBOSYLTRANSFERASE"/>
    <property type="match status" value="1"/>
</dbReference>
<dbReference type="PANTHER" id="PTHR32315:SF3">
    <property type="entry name" value="ADENINE PHOSPHORIBOSYLTRANSFERASE"/>
    <property type="match status" value="1"/>
</dbReference>
<dbReference type="Pfam" id="PF00156">
    <property type="entry name" value="Pribosyltran"/>
    <property type="match status" value="1"/>
</dbReference>
<dbReference type="SUPFAM" id="SSF53271">
    <property type="entry name" value="PRTase-like"/>
    <property type="match status" value="1"/>
</dbReference>
<dbReference type="PROSITE" id="PS00103">
    <property type="entry name" value="PUR_PYR_PR_TRANSFER"/>
    <property type="match status" value="1"/>
</dbReference>
<feature type="chain" id="PRO_1000073791" description="Adenine phosphoribosyltransferase">
    <location>
        <begin position="1"/>
        <end position="183"/>
    </location>
</feature>
<comment type="function">
    <text evidence="1">Catalyzes a salvage reaction resulting in the formation of AMP, that is energically less costly than de novo synthesis.</text>
</comment>
<comment type="catalytic activity">
    <reaction evidence="1">
        <text>AMP + diphosphate = 5-phospho-alpha-D-ribose 1-diphosphate + adenine</text>
        <dbReference type="Rhea" id="RHEA:16609"/>
        <dbReference type="ChEBI" id="CHEBI:16708"/>
        <dbReference type="ChEBI" id="CHEBI:33019"/>
        <dbReference type="ChEBI" id="CHEBI:58017"/>
        <dbReference type="ChEBI" id="CHEBI:456215"/>
        <dbReference type="EC" id="2.4.2.7"/>
    </reaction>
</comment>
<comment type="pathway">
    <text evidence="1">Purine metabolism; AMP biosynthesis via salvage pathway; AMP from adenine: step 1/1.</text>
</comment>
<comment type="subunit">
    <text evidence="1">Homodimer.</text>
</comment>
<comment type="subcellular location">
    <subcellularLocation>
        <location evidence="1">Cytoplasm</location>
    </subcellularLocation>
</comment>
<comment type="similarity">
    <text evidence="1">Belongs to the purine/pyrimidine phosphoribosyltransferase family.</text>
</comment>
<protein>
    <recommendedName>
        <fullName evidence="1">Adenine phosphoribosyltransferase</fullName>
        <shortName evidence="1">APRT</shortName>
        <ecNumber evidence="1">2.4.2.7</ecNumber>
    </recommendedName>
</protein>
<accession>B1IZC5</accession>
<proteinExistence type="inferred from homology"/>
<name>APT_ECOLC</name>
<gene>
    <name evidence="1" type="primary">apt</name>
    <name type="ordered locus">EcolC_3147</name>
</gene>
<reference key="1">
    <citation type="submission" date="2008-02" db="EMBL/GenBank/DDBJ databases">
        <title>Complete sequence of Escherichia coli C str. ATCC 8739.</title>
        <authorList>
            <person name="Copeland A."/>
            <person name="Lucas S."/>
            <person name="Lapidus A."/>
            <person name="Glavina del Rio T."/>
            <person name="Dalin E."/>
            <person name="Tice H."/>
            <person name="Bruce D."/>
            <person name="Goodwin L."/>
            <person name="Pitluck S."/>
            <person name="Kiss H."/>
            <person name="Brettin T."/>
            <person name="Detter J.C."/>
            <person name="Han C."/>
            <person name="Kuske C.R."/>
            <person name="Schmutz J."/>
            <person name="Larimer F."/>
            <person name="Land M."/>
            <person name="Hauser L."/>
            <person name="Kyrpides N."/>
            <person name="Mikhailova N."/>
            <person name="Ingram L."/>
            <person name="Richardson P."/>
        </authorList>
    </citation>
    <scope>NUCLEOTIDE SEQUENCE [LARGE SCALE GENOMIC DNA]</scope>
    <source>
        <strain>ATCC 8739 / DSM 1576 / NBRC 3972 / NCIMB 8545 / WDCM 00012 / Crooks</strain>
    </source>
</reference>
<keyword id="KW-0963">Cytoplasm</keyword>
<keyword id="KW-0328">Glycosyltransferase</keyword>
<keyword id="KW-0660">Purine salvage</keyword>
<keyword id="KW-0808">Transferase</keyword>